<dbReference type="EC" id="2.5.1.145" evidence="1"/>
<dbReference type="EMBL" id="AP006840">
    <property type="protein sequence ID" value="BAD39394.1"/>
    <property type="molecule type" value="Genomic_DNA"/>
</dbReference>
<dbReference type="RefSeq" id="WP_011194543.1">
    <property type="nucleotide sequence ID" value="NC_006177.1"/>
</dbReference>
<dbReference type="SMR" id="Q67SE9"/>
<dbReference type="STRING" id="292459.STH409"/>
<dbReference type="KEGG" id="sth:STH409"/>
<dbReference type="eggNOG" id="COG0682">
    <property type="taxonomic scope" value="Bacteria"/>
</dbReference>
<dbReference type="HOGENOM" id="CLU_013386_1_2_9"/>
<dbReference type="UniPathway" id="UPA00664"/>
<dbReference type="Proteomes" id="UP000000417">
    <property type="component" value="Chromosome"/>
</dbReference>
<dbReference type="GO" id="GO:0005886">
    <property type="term" value="C:plasma membrane"/>
    <property type="evidence" value="ECO:0007669"/>
    <property type="project" value="UniProtKB-SubCell"/>
</dbReference>
<dbReference type="GO" id="GO:0008961">
    <property type="term" value="F:phosphatidylglycerol-prolipoprotein diacylglyceryl transferase activity"/>
    <property type="evidence" value="ECO:0007669"/>
    <property type="project" value="UniProtKB-UniRule"/>
</dbReference>
<dbReference type="GO" id="GO:0042158">
    <property type="term" value="P:lipoprotein biosynthetic process"/>
    <property type="evidence" value="ECO:0007669"/>
    <property type="project" value="UniProtKB-UniRule"/>
</dbReference>
<dbReference type="HAMAP" id="MF_01147">
    <property type="entry name" value="Lgt"/>
    <property type="match status" value="1"/>
</dbReference>
<dbReference type="InterPro" id="IPR001640">
    <property type="entry name" value="Lgt"/>
</dbReference>
<dbReference type="NCBIfam" id="TIGR00544">
    <property type="entry name" value="lgt"/>
    <property type="match status" value="1"/>
</dbReference>
<dbReference type="PANTHER" id="PTHR30589:SF0">
    <property type="entry name" value="PHOSPHATIDYLGLYCEROL--PROLIPOPROTEIN DIACYLGLYCERYL TRANSFERASE"/>
    <property type="match status" value="1"/>
</dbReference>
<dbReference type="PANTHER" id="PTHR30589">
    <property type="entry name" value="PROLIPOPROTEIN DIACYLGLYCERYL TRANSFERASE"/>
    <property type="match status" value="1"/>
</dbReference>
<dbReference type="Pfam" id="PF01790">
    <property type="entry name" value="LGT"/>
    <property type="match status" value="1"/>
</dbReference>
<dbReference type="PROSITE" id="PS01311">
    <property type="entry name" value="LGT"/>
    <property type="match status" value="1"/>
</dbReference>
<sequence length="268" mass="29866">MQLLAFVDPVAIQIGPLSIRWYGIIIVSAIALSIWLGGRFARDRGLDPAFVDSFAIILVPAGILGARLYEVFVLQWPYYSQHPDKILQIWEGGLAIHGAVLGGAIAAAIYLPMRKQPFWRWADVVGLVLPLAQAIGRWGNFFNQEAYGDPAPDWLVRLMPGWLREGMTISGTVMHPTFLYESVWNLLTFGILLVCHRRRMKTGVVFSLYLVLYNAGRFLIESIRQDSSFIFGRIRVAQLVAAVLAILGLVLLAWFLRRPAESGDSAGV</sequence>
<gene>
    <name evidence="1" type="primary">lgt</name>
    <name type="ordered locus">STH409</name>
</gene>
<evidence type="ECO:0000255" key="1">
    <source>
        <dbReference type="HAMAP-Rule" id="MF_01147"/>
    </source>
</evidence>
<protein>
    <recommendedName>
        <fullName evidence="1">Phosphatidylglycerol--prolipoprotein diacylglyceryl transferase</fullName>
        <ecNumber evidence="1">2.5.1.145</ecNumber>
    </recommendedName>
</protein>
<name>LGT_SYMTH</name>
<keyword id="KW-1003">Cell membrane</keyword>
<keyword id="KW-0472">Membrane</keyword>
<keyword id="KW-1185">Reference proteome</keyword>
<keyword id="KW-0808">Transferase</keyword>
<keyword id="KW-0812">Transmembrane</keyword>
<keyword id="KW-1133">Transmembrane helix</keyword>
<feature type="chain" id="PRO_0000172696" description="Phosphatidylglycerol--prolipoprotein diacylglyceryl transferase">
    <location>
        <begin position="1"/>
        <end position="268"/>
    </location>
</feature>
<feature type="transmembrane region" description="Helical" evidence="1">
    <location>
        <begin position="21"/>
        <end position="41"/>
    </location>
</feature>
<feature type="transmembrane region" description="Helical" evidence="1">
    <location>
        <begin position="54"/>
        <end position="74"/>
    </location>
</feature>
<feature type="transmembrane region" description="Helical" evidence="1">
    <location>
        <begin position="93"/>
        <end position="113"/>
    </location>
</feature>
<feature type="transmembrane region" description="Helical" evidence="1">
    <location>
        <begin position="122"/>
        <end position="142"/>
    </location>
</feature>
<feature type="transmembrane region" description="Helical" evidence="1">
    <location>
        <begin position="173"/>
        <end position="193"/>
    </location>
</feature>
<feature type="transmembrane region" description="Helical" evidence="1">
    <location>
        <begin position="203"/>
        <end position="223"/>
    </location>
</feature>
<feature type="transmembrane region" description="Helical" evidence="1">
    <location>
        <begin position="236"/>
        <end position="256"/>
    </location>
</feature>
<feature type="binding site" evidence="1">
    <location>
        <position position="137"/>
    </location>
    <ligand>
        <name>a 1,2-diacyl-sn-glycero-3-phospho-(1'-sn-glycerol)</name>
        <dbReference type="ChEBI" id="CHEBI:64716"/>
    </ligand>
</feature>
<organism>
    <name type="scientific">Symbiobacterium thermophilum (strain DSM 24528 / JCM 14929 / IAM 14863 / T)</name>
    <dbReference type="NCBI Taxonomy" id="292459"/>
    <lineage>
        <taxon>Bacteria</taxon>
        <taxon>Bacillati</taxon>
        <taxon>Bacillota</taxon>
        <taxon>Clostridia</taxon>
        <taxon>Eubacteriales</taxon>
        <taxon>Symbiobacteriaceae</taxon>
        <taxon>Symbiobacterium</taxon>
    </lineage>
</organism>
<proteinExistence type="inferred from homology"/>
<reference key="1">
    <citation type="journal article" date="2004" name="Nucleic Acids Res.">
        <title>Genome sequence of Symbiobacterium thermophilum, an uncultivable bacterium that depends on microbial commensalism.</title>
        <authorList>
            <person name="Ueda K."/>
            <person name="Yamashita A."/>
            <person name="Ishikawa J."/>
            <person name="Shimada M."/>
            <person name="Watsuji T."/>
            <person name="Morimura K."/>
            <person name="Ikeda H."/>
            <person name="Hattori M."/>
            <person name="Beppu T."/>
        </authorList>
    </citation>
    <scope>NUCLEOTIDE SEQUENCE [LARGE SCALE GENOMIC DNA]</scope>
    <source>
        <strain>DSM 24528 / JCM 14929 / IAM 14863 / T</strain>
    </source>
</reference>
<comment type="function">
    <text evidence="1">Catalyzes the transfer of the diacylglyceryl group from phosphatidylglycerol to the sulfhydryl group of the N-terminal cysteine of a prolipoprotein, the first step in the formation of mature lipoproteins.</text>
</comment>
<comment type="catalytic activity">
    <reaction evidence="1">
        <text>L-cysteinyl-[prolipoprotein] + a 1,2-diacyl-sn-glycero-3-phospho-(1'-sn-glycerol) = an S-1,2-diacyl-sn-glyceryl-L-cysteinyl-[prolipoprotein] + sn-glycerol 1-phosphate + H(+)</text>
        <dbReference type="Rhea" id="RHEA:56712"/>
        <dbReference type="Rhea" id="RHEA-COMP:14679"/>
        <dbReference type="Rhea" id="RHEA-COMP:14680"/>
        <dbReference type="ChEBI" id="CHEBI:15378"/>
        <dbReference type="ChEBI" id="CHEBI:29950"/>
        <dbReference type="ChEBI" id="CHEBI:57685"/>
        <dbReference type="ChEBI" id="CHEBI:64716"/>
        <dbReference type="ChEBI" id="CHEBI:140658"/>
        <dbReference type="EC" id="2.5.1.145"/>
    </reaction>
</comment>
<comment type="pathway">
    <text evidence="1">Protein modification; lipoprotein biosynthesis (diacylglyceryl transfer).</text>
</comment>
<comment type="subcellular location">
    <subcellularLocation>
        <location evidence="1">Cell membrane</location>
        <topology evidence="1">Multi-pass membrane protein</topology>
    </subcellularLocation>
</comment>
<comment type="similarity">
    <text evidence="1">Belongs to the Lgt family.</text>
</comment>
<accession>Q67SE9</accession>